<comment type="function">
    <text evidence="1">Fluoride-specific ion channel. Important for reducing fluoride concentration in the cell, thus reducing its toxicity.</text>
</comment>
<comment type="catalytic activity">
    <reaction evidence="1">
        <text>fluoride(in) = fluoride(out)</text>
        <dbReference type="Rhea" id="RHEA:76159"/>
        <dbReference type="ChEBI" id="CHEBI:17051"/>
    </reaction>
    <physiologicalReaction direction="left-to-right" evidence="1">
        <dbReference type="Rhea" id="RHEA:76160"/>
    </physiologicalReaction>
</comment>
<comment type="activity regulation">
    <text evidence="1">Na(+) is not transported, but it plays an essential structural role and its presence is essential for fluoride channel function.</text>
</comment>
<comment type="subcellular location">
    <subcellularLocation>
        <location evidence="1">Cell inner membrane</location>
        <topology evidence="1">Multi-pass membrane protein</topology>
    </subcellularLocation>
</comment>
<comment type="similarity">
    <text evidence="1">Belongs to the fluoride channel Fluc/FEX (TC 1.A.43) family.</text>
</comment>
<proteinExistence type="inferred from homology"/>
<name>FLUC_MAGMM</name>
<sequence length="123" mass="13189">MQIAWVALGGAIGAVARYVLSNAVYAWLGRAFPWGTLSVNLLGSFIMGLLFYLFTQRLMVPEALKPLVLVGGLGAFTTFSTFSLETLNLMQSGSWSLALLNMLSSVLLCVLAAYLGLVVGRLI</sequence>
<organism>
    <name type="scientific">Magnetococcus marinus (strain ATCC BAA-1437 / JCM 17883 / MC-1)</name>
    <dbReference type="NCBI Taxonomy" id="156889"/>
    <lineage>
        <taxon>Bacteria</taxon>
        <taxon>Pseudomonadati</taxon>
        <taxon>Pseudomonadota</taxon>
        <taxon>Alphaproteobacteria</taxon>
        <taxon>Magnetococcales</taxon>
        <taxon>Magnetococcaceae</taxon>
        <taxon>Magnetococcus</taxon>
    </lineage>
</organism>
<feature type="chain" id="PRO_1000206254" description="Fluoride-specific ion channel FluC">
    <location>
        <begin position="1"/>
        <end position="123"/>
    </location>
</feature>
<feature type="transmembrane region" description="Helical" evidence="1">
    <location>
        <begin position="3"/>
        <end position="23"/>
    </location>
</feature>
<feature type="transmembrane region" description="Helical" evidence="1">
    <location>
        <begin position="34"/>
        <end position="54"/>
    </location>
</feature>
<feature type="transmembrane region" description="Helical" evidence="1">
    <location>
        <begin position="67"/>
        <end position="87"/>
    </location>
</feature>
<feature type="transmembrane region" description="Helical" evidence="1">
    <location>
        <begin position="99"/>
        <end position="119"/>
    </location>
</feature>
<feature type="binding site" evidence="1">
    <location>
        <position position="74"/>
    </location>
    <ligand>
        <name>Na(+)</name>
        <dbReference type="ChEBI" id="CHEBI:29101"/>
        <note>structural</note>
    </ligand>
</feature>
<feature type="binding site" evidence="1">
    <location>
        <position position="77"/>
    </location>
    <ligand>
        <name>Na(+)</name>
        <dbReference type="ChEBI" id="CHEBI:29101"/>
        <note>structural</note>
    </ligand>
</feature>
<evidence type="ECO:0000255" key="1">
    <source>
        <dbReference type="HAMAP-Rule" id="MF_00454"/>
    </source>
</evidence>
<reference key="1">
    <citation type="journal article" date="2009" name="Appl. Environ. Microbiol.">
        <title>Complete genome sequence of the chemolithoautotrophic marine magnetotactic coccus strain MC-1.</title>
        <authorList>
            <person name="Schubbe S."/>
            <person name="Williams T.J."/>
            <person name="Xie G."/>
            <person name="Kiss H.E."/>
            <person name="Brettin T.S."/>
            <person name="Martinez D."/>
            <person name="Ross C.A."/>
            <person name="Schuler D."/>
            <person name="Cox B.L."/>
            <person name="Nealson K.H."/>
            <person name="Bazylinski D.A."/>
        </authorList>
    </citation>
    <scope>NUCLEOTIDE SEQUENCE [LARGE SCALE GENOMIC DNA]</scope>
    <source>
        <strain>ATCC BAA-1437 / JCM 17883 / MC-1</strain>
    </source>
</reference>
<protein>
    <recommendedName>
        <fullName evidence="1">Fluoride-specific ion channel FluC</fullName>
    </recommendedName>
</protein>
<keyword id="KW-0997">Cell inner membrane</keyword>
<keyword id="KW-1003">Cell membrane</keyword>
<keyword id="KW-0407">Ion channel</keyword>
<keyword id="KW-0406">Ion transport</keyword>
<keyword id="KW-0472">Membrane</keyword>
<keyword id="KW-0479">Metal-binding</keyword>
<keyword id="KW-1185">Reference proteome</keyword>
<keyword id="KW-0915">Sodium</keyword>
<keyword id="KW-0812">Transmembrane</keyword>
<keyword id="KW-1133">Transmembrane helix</keyword>
<keyword id="KW-0813">Transport</keyword>
<dbReference type="EMBL" id="CP000471">
    <property type="protein sequence ID" value="ABK44182.1"/>
    <property type="molecule type" value="Genomic_DNA"/>
</dbReference>
<dbReference type="RefSeq" id="WP_011713330.1">
    <property type="nucleotide sequence ID" value="NC_008576.1"/>
</dbReference>
<dbReference type="SMR" id="A0L889"/>
<dbReference type="STRING" id="156889.Mmc1_1673"/>
<dbReference type="KEGG" id="mgm:Mmc1_1673"/>
<dbReference type="eggNOG" id="COG0239">
    <property type="taxonomic scope" value="Bacteria"/>
</dbReference>
<dbReference type="HOGENOM" id="CLU_114342_3_0_5"/>
<dbReference type="OrthoDB" id="9806299at2"/>
<dbReference type="Proteomes" id="UP000002586">
    <property type="component" value="Chromosome"/>
</dbReference>
<dbReference type="GO" id="GO:0005886">
    <property type="term" value="C:plasma membrane"/>
    <property type="evidence" value="ECO:0007669"/>
    <property type="project" value="UniProtKB-SubCell"/>
</dbReference>
<dbReference type="GO" id="GO:0062054">
    <property type="term" value="F:fluoride channel activity"/>
    <property type="evidence" value="ECO:0007669"/>
    <property type="project" value="UniProtKB-UniRule"/>
</dbReference>
<dbReference type="GO" id="GO:0046872">
    <property type="term" value="F:metal ion binding"/>
    <property type="evidence" value="ECO:0007669"/>
    <property type="project" value="UniProtKB-KW"/>
</dbReference>
<dbReference type="GO" id="GO:0140114">
    <property type="term" value="P:cellular detoxification of fluoride"/>
    <property type="evidence" value="ECO:0007669"/>
    <property type="project" value="UniProtKB-UniRule"/>
</dbReference>
<dbReference type="HAMAP" id="MF_00454">
    <property type="entry name" value="FluC"/>
    <property type="match status" value="1"/>
</dbReference>
<dbReference type="InterPro" id="IPR003691">
    <property type="entry name" value="FluC"/>
</dbReference>
<dbReference type="NCBIfam" id="TIGR00494">
    <property type="entry name" value="crcB"/>
    <property type="match status" value="1"/>
</dbReference>
<dbReference type="PANTHER" id="PTHR28259">
    <property type="entry name" value="FLUORIDE EXPORT PROTEIN 1-RELATED"/>
    <property type="match status" value="1"/>
</dbReference>
<dbReference type="PANTHER" id="PTHR28259:SF1">
    <property type="entry name" value="FLUORIDE EXPORT PROTEIN 1-RELATED"/>
    <property type="match status" value="1"/>
</dbReference>
<dbReference type="Pfam" id="PF02537">
    <property type="entry name" value="CRCB"/>
    <property type="match status" value="1"/>
</dbReference>
<accession>A0L889</accession>
<gene>
    <name evidence="1" type="primary">fluC</name>
    <name evidence="1" type="synonym">crcB</name>
    <name type="ordered locus">Mmc1_1673</name>
</gene>